<accession>P0CM92</accession>
<accession>Q561D1</accession>
<accession>Q5KQ32</accession>
<proteinExistence type="inferred from homology"/>
<name>PNS1_CRYNJ</name>
<gene>
    <name type="primary">PNS1</name>
    <name type="ordered locus">CNA00640</name>
</gene>
<dbReference type="EMBL" id="AE017341">
    <property type="protein sequence ID" value="AAW41263.1"/>
    <property type="molecule type" value="Genomic_DNA"/>
</dbReference>
<dbReference type="RefSeq" id="XP_567082.1">
    <property type="nucleotide sequence ID" value="XM_567082.1"/>
</dbReference>
<dbReference type="SMR" id="P0CM92"/>
<dbReference type="STRING" id="214684.P0CM92"/>
<dbReference type="PaxDb" id="214684-P0CM92"/>
<dbReference type="EnsemblFungi" id="AAW41263">
    <property type="protein sequence ID" value="AAW41263"/>
    <property type="gene ID" value="CNA00640"/>
</dbReference>
<dbReference type="GeneID" id="3253742"/>
<dbReference type="KEGG" id="cne:CNA00640"/>
<dbReference type="VEuPathDB" id="FungiDB:CNA00640"/>
<dbReference type="eggNOG" id="KOG1362">
    <property type="taxonomic scope" value="Eukaryota"/>
</dbReference>
<dbReference type="HOGENOM" id="CLU_026724_0_0_1"/>
<dbReference type="InParanoid" id="P0CM92"/>
<dbReference type="OMA" id="DTIFVAM"/>
<dbReference type="OrthoDB" id="44736at2759"/>
<dbReference type="Proteomes" id="UP000002149">
    <property type="component" value="Chromosome 1"/>
</dbReference>
<dbReference type="GO" id="GO:0016020">
    <property type="term" value="C:membrane"/>
    <property type="evidence" value="ECO:0000318"/>
    <property type="project" value="GO_Central"/>
</dbReference>
<dbReference type="GO" id="GO:0005886">
    <property type="term" value="C:plasma membrane"/>
    <property type="evidence" value="ECO:0007669"/>
    <property type="project" value="UniProtKB-SubCell"/>
</dbReference>
<dbReference type="GO" id="GO:0022857">
    <property type="term" value="F:transmembrane transporter activity"/>
    <property type="evidence" value="ECO:0000318"/>
    <property type="project" value="GO_Central"/>
</dbReference>
<dbReference type="GO" id="GO:0055085">
    <property type="term" value="P:transmembrane transport"/>
    <property type="evidence" value="ECO:0000318"/>
    <property type="project" value="GO_Central"/>
</dbReference>
<dbReference type="InterPro" id="IPR007603">
    <property type="entry name" value="Choline_transptr-like"/>
</dbReference>
<dbReference type="PANTHER" id="PTHR12385">
    <property type="entry name" value="CHOLINE TRANSPORTER-LIKE (SLC FAMILY 44)"/>
    <property type="match status" value="1"/>
</dbReference>
<dbReference type="PANTHER" id="PTHR12385:SF4">
    <property type="entry name" value="PROTEIN PNS1"/>
    <property type="match status" value="1"/>
</dbReference>
<dbReference type="Pfam" id="PF04515">
    <property type="entry name" value="Choline_transpo"/>
    <property type="match status" value="1"/>
</dbReference>
<comment type="function">
    <text evidence="1">Probably involved in transport through the plasma membrane.</text>
</comment>
<comment type="subcellular location">
    <subcellularLocation>
        <location evidence="1">Cell membrane</location>
        <topology evidence="1">Multi-pass membrane protein</topology>
    </subcellularLocation>
</comment>
<comment type="similarity">
    <text evidence="4">Belongs to the CTL (choline transporter-like) family.</text>
</comment>
<protein>
    <recommendedName>
        <fullName>Protein PNS1</fullName>
    </recommendedName>
</protein>
<organism>
    <name type="scientific">Cryptococcus neoformans var. neoformans serotype D (strain JEC21 / ATCC MYA-565)</name>
    <name type="common">Filobasidiella neoformans</name>
    <dbReference type="NCBI Taxonomy" id="214684"/>
    <lineage>
        <taxon>Eukaryota</taxon>
        <taxon>Fungi</taxon>
        <taxon>Dikarya</taxon>
        <taxon>Basidiomycota</taxon>
        <taxon>Agaricomycotina</taxon>
        <taxon>Tremellomycetes</taxon>
        <taxon>Tremellales</taxon>
        <taxon>Cryptococcaceae</taxon>
        <taxon>Cryptococcus</taxon>
        <taxon>Cryptococcus neoformans species complex</taxon>
    </lineage>
</organism>
<sequence>MSAQEFYQGGNQRGYQQQQFPPPPGGPPQDQNGGKQEYVPPQGQPPNYNMKPSQPYASTNPETGGQPVYQDTAPFSQANEKTGERMNPRKRVNDIIPLILFIAAVVGFAVVSGIAIHGFVQVNGLGGGMGDSSIGRTGSSITLDYHTVYLLLVVVALGLVIASLYLAALRAFTKIILEVTLALTVILNIGICIYYFIIQYWSGAIIFLIIALVSVFFYWGMRKRIPLAKLLLQTTIDVTKHHPSVYVVVFIGLIIQAAVSVWYTFTCIAIYVKWTPGSAACSDGGCSSSKVAGLVFYATFSYLWLSQVIGNVILCTLAGGVFGGWYYYGPRTPGGGVPKRASLLAFVRASTLSLGSIAFGSLLVTILELLRLILQLFRQYEAGQGDMIGSILICIAQCCIGCIQWMVEYFNKYAYIEIALYGKSYIPAAKDTWRLLKDRGIDALVNDSLVGTALMWGAYINGFLCAVLGYFYLRFTHPAYNSDGQYSAPVILFSFLIGLNESFTVGSAIDAGVSTIFVGLGEDPMVLAERSPGLFEMIRQVYPRVVQGVPH</sequence>
<evidence type="ECO:0000250" key="1"/>
<evidence type="ECO:0000255" key="2"/>
<evidence type="ECO:0000256" key="3">
    <source>
        <dbReference type="SAM" id="MobiDB-lite"/>
    </source>
</evidence>
<evidence type="ECO:0000305" key="4"/>
<feature type="chain" id="PRO_0000191733" description="Protein PNS1">
    <location>
        <begin position="1"/>
        <end position="551"/>
    </location>
</feature>
<feature type="topological domain" description="Cytoplasmic" evidence="2">
    <location>
        <begin position="1"/>
        <end position="94"/>
    </location>
</feature>
<feature type="transmembrane region" description="Helical" evidence="2">
    <location>
        <begin position="95"/>
        <end position="115"/>
    </location>
</feature>
<feature type="topological domain" description="Extracellular" evidence="2">
    <location>
        <begin position="116"/>
        <end position="147"/>
    </location>
</feature>
<feature type="transmembrane region" description="Helical" evidence="2">
    <location>
        <begin position="148"/>
        <end position="168"/>
    </location>
</feature>
<feature type="topological domain" description="Cytoplasmic" evidence="2">
    <location>
        <begin position="169"/>
        <end position="177"/>
    </location>
</feature>
<feature type="transmembrane region" description="Helical" evidence="2">
    <location>
        <begin position="178"/>
        <end position="198"/>
    </location>
</feature>
<feature type="topological domain" description="Extracellular" evidence="2">
    <location>
        <begin position="199"/>
        <end position="200"/>
    </location>
</feature>
<feature type="transmembrane region" description="Helical" evidence="2">
    <location>
        <begin position="201"/>
        <end position="221"/>
    </location>
</feature>
<feature type="topological domain" description="Cytoplasmic" evidence="2">
    <location>
        <begin position="222"/>
        <end position="244"/>
    </location>
</feature>
<feature type="transmembrane region" description="Helical" evidence="2">
    <location>
        <begin position="245"/>
        <end position="265"/>
    </location>
</feature>
<feature type="topological domain" description="Extracellular" evidence="2">
    <location>
        <begin position="266"/>
        <end position="307"/>
    </location>
</feature>
<feature type="transmembrane region" description="Helical" evidence="2">
    <location>
        <begin position="308"/>
        <end position="328"/>
    </location>
</feature>
<feature type="topological domain" description="Cytoplasmic" evidence="2">
    <location>
        <begin position="329"/>
        <end position="356"/>
    </location>
</feature>
<feature type="transmembrane region" description="Helical" evidence="2">
    <location>
        <begin position="357"/>
        <end position="377"/>
    </location>
</feature>
<feature type="topological domain" description="Extracellular" evidence="2">
    <location>
        <begin position="378"/>
        <end position="386"/>
    </location>
</feature>
<feature type="transmembrane region" description="Helical" evidence="2">
    <location>
        <begin position="387"/>
        <end position="407"/>
    </location>
</feature>
<feature type="topological domain" description="Cytoplasmic" evidence="2">
    <location>
        <begin position="408"/>
        <end position="452"/>
    </location>
</feature>
<feature type="transmembrane region" description="Helical" evidence="2">
    <location>
        <begin position="453"/>
        <end position="473"/>
    </location>
</feature>
<feature type="topological domain" description="Extracellular" evidence="2">
    <location>
        <begin position="474"/>
        <end position="488"/>
    </location>
</feature>
<feature type="transmembrane region" description="Helical" evidence="2">
    <location>
        <begin position="489"/>
        <end position="509"/>
    </location>
</feature>
<feature type="topological domain" description="Cytoplasmic" evidence="2">
    <location>
        <begin position="510"/>
        <end position="551"/>
    </location>
</feature>
<feature type="region of interest" description="Disordered" evidence="3">
    <location>
        <begin position="1"/>
        <end position="72"/>
    </location>
</feature>
<feature type="compositionally biased region" description="Low complexity" evidence="3">
    <location>
        <begin position="8"/>
        <end position="19"/>
    </location>
</feature>
<feature type="compositionally biased region" description="Polar residues" evidence="3">
    <location>
        <begin position="45"/>
        <end position="63"/>
    </location>
</feature>
<keyword id="KW-1003">Cell membrane</keyword>
<keyword id="KW-0472">Membrane</keyword>
<keyword id="KW-1185">Reference proteome</keyword>
<keyword id="KW-0812">Transmembrane</keyword>
<keyword id="KW-1133">Transmembrane helix</keyword>
<keyword id="KW-0813">Transport</keyword>
<reference key="1">
    <citation type="journal article" date="2005" name="Science">
        <title>The genome of the basidiomycetous yeast and human pathogen Cryptococcus neoformans.</title>
        <authorList>
            <person name="Loftus B.J."/>
            <person name="Fung E."/>
            <person name="Roncaglia P."/>
            <person name="Rowley D."/>
            <person name="Amedeo P."/>
            <person name="Bruno D."/>
            <person name="Vamathevan J."/>
            <person name="Miranda M."/>
            <person name="Anderson I.J."/>
            <person name="Fraser J.A."/>
            <person name="Allen J.E."/>
            <person name="Bosdet I.E."/>
            <person name="Brent M.R."/>
            <person name="Chiu R."/>
            <person name="Doering T.L."/>
            <person name="Donlin M.J."/>
            <person name="D'Souza C.A."/>
            <person name="Fox D.S."/>
            <person name="Grinberg V."/>
            <person name="Fu J."/>
            <person name="Fukushima M."/>
            <person name="Haas B.J."/>
            <person name="Huang J.C."/>
            <person name="Janbon G."/>
            <person name="Jones S.J.M."/>
            <person name="Koo H.L."/>
            <person name="Krzywinski M.I."/>
            <person name="Kwon-Chung K.J."/>
            <person name="Lengeler K.B."/>
            <person name="Maiti R."/>
            <person name="Marra M.A."/>
            <person name="Marra R.E."/>
            <person name="Mathewson C.A."/>
            <person name="Mitchell T.G."/>
            <person name="Pertea M."/>
            <person name="Riggs F.R."/>
            <person name="Salzberg S.L."/>
            <person name="Schein J.E."/>
            <person name="Shvartsbeyn A."/>
            <person name="Shin H."/>
            <person name="Shumway M."/>
            <person name="Specht C.A."/>
            <person name="Suh B.B."/>
            <person name="Tenney A."/>
            <person name="Utterback T.R."/>
            <person name="Wickes B.L."/>
            <person name="Wortman J.R."/>
            <person name="Wye N.H."/>
            <person name="Kronstad J.W."/>
            <person name="Lodge J.K."/>
            <person name="Heitman J."/>
            <person name="Davis R.W."/>
            <person name="Fraser C.M."/>
            <person name="Hyman R.W."/>
        </authorList>
    </citation>
    <scope>NUCLEOTIDE SEQUENCE [LARGE SCALE GENOMIC DNA]</scope>
    <source>
        <strain>JEC21 / ATCC MYA-565</strain>
    </source>
</reference>